<accession>Q8FHN0</accession>
<reference key="1">
    <citation type="journal article" date="2002" name="Proc. Natl. Acad. Sci. U.S.A.">
        <title>Extensive mosaic structure revealed by the complete genome sequence of uropathogenic Escherichia coli.</title>
        <authorList>
            <person name="Welch R.A."/>
            <person name="Burland V."/>
            <person name="Plunkett G. III"/>
            <person name="Redford P."/>
            <person name="Roesch P."/>
            <person name="Rasko D."/>
            <person name="Buckles E.L."/>
            <person name="Liou S.-R."/>
            <person name="Boutin A."/>
            <person name="Hackett J."/>
            <person name="Stroud D."/>
            <person name="Mayhew G.F."/>
            <person name="Rose D.J."/>
            <person name="Zhou S."/>
            <person name="Schwartz D.C."/>
            <person name="Perna N.T."/>
            <person name="Mobley H.L.T."/>
            <person name="Donnenberg M.S."/>
            <person name="Blattner F.R."/>
        </authorList>
    </citation>
    <scope>NUCLEOTIDE SEQUENCE [LARGE SCALE GENOMIC DNA]</scope>
    <source>
        <strain>CFT073 / ATCC 700928 / UPEC</strain>
    </source>
</reference>
<comment type="function">
    <text evidence="2">Quinone reductase that provides resistance to thiol-specific stress caused by electrophilic quinones.</text>
</comment>
<comment type="function">
    <text evidence="2">Also exhibits azoreductase activity. Catalyzes the reductive cleavage of the azo bond in aromatic azo compounds to the corresponding amines.</text>
</comment>
<comment type="catalytic activity">
    <reaction evidence="2">
        <text>2 a quinone + NADH + H(+) = 2 a 1,4-benzosemiquinone + NAD(+)</text>
        <dbReference type="Rhea" id="RHEA:65952"/>
        <dbReference type="ChEBI" id="CHEBI:15378"/>
        <dbReference type="ChEBI" id="CHEBI:57540"/>
        <dbReference type="ChEBI" id="CHEBI:57945"/>
        <dbReference type="ChEBI" id="CHEBI:132124"/>
        <dbReference type="ChEBI" id="CHEBI:134225"/>
    </reaction>
</comment>
<comment type="catalytic activity">
    <reaction evidence="2">
        <text>N,N-dimethyl-1,4-phenylenediamine + anthranilate + 2 NAD(+) = 2-(4-dimethylaminophenyl)diazenylbenzoate + 2 NADH + 2 H(+)</text>
        <dbReference type="Rhea" id="RHEA:55872"/>
        <dbReference type="ChEBI" id="CHEBI:15378"/>
        <dbReference type="ChEBI" id="CHEBI:15783"/>
        <dbReference type="ChEBI" id="CHEBI:16567"/>
        <dbReference type="ChEBI" id="CHEBI:57540"/>
        <dbReference type="ChEBI" id="CHEBI:57945"/>
        <dbReference type="ChEBI" id="CHEBI:71579"/>
        <dbReference type="EC" id="1.7.1.17"/>
    </reaction>
</comment>
<comment type="cofactor">
    <cofactor evidence="2">
        <name>FMN</name>
        <dbReference type="ChEBI" id="CHEBI:58210"/>
    </cofactor>
    <text evidence="2">Binds 1 FMN per subunit.</text>
</comment>
<comment type="subunit">
    <text evidence="2">Homodimer.</text>
</comment>
<comment type="similarity">
    <text evidence="2">Belongs to the azoreductase type 1 family.</text>
</comment>
<organism>
    <name type="scientific">Escherichia coli O6:H1 (strain CFT073 / ATCC 700928 / UPEC)</name>
    <dbReference type="NCBI Taxonomy" id="199310"/>
    <lineage>
        <taxon>Bacteria</taxon>
        <taxon>Pseudomonadati</taxon>
        <taxon>Pseudomonadota</taxon>
        <taxon>Gammaproteobacteria</taxon>
        <taxon>Enterobacterales</taxon>
        <taxon>Enterobacteriaceae</taxon>
        <taxon>Escherichia</taxon>
    </lineage>
</organism>
<gene>
    <name evidence="2" type="primary">azoR</name>
    <name type="ordered locus">c1839</name>
</gene>
<feature type="initiator methionine" description="Removed" evidence="1">
    <location>
        <position position="1"/>
    </location>
</feature>
<feature type="chain" id="PRO_0000166311" description="FMN-dependent NADH:quinone oxidoreductase">
    <location>
        <begin position="2"/>
        <end position="201"/>
    </location>
</feature>
<feature type="binding site" evidence="2">
    <location>
        <position position="10"/>
    </location>
    <ligand>
        <name>FMN</name>
        <dbReference type="ChEBI" id="CHEBI:58210"/>
    </ligand>
</feature>
<feature type="binding site" evidence="2">
    <location>
        <begin position="16"/>
        <end position="18"/>
    </location>
    <ligand>
        <name>FMN</name>
        <dbReference type="ChEBI" id="CHEBI:58210"/>
    </ligand>
</feature>
<feature type="binding site" evidence="2">
    <location>
        <begin position="96"/>
        <end position="99"/>
    </location>
    <ligand>
        <name>FMN</name>
        <dbReference type="ChEBI" id="CHEBI:58210"/>
    </ligand>
</feature>
<feature type="binding site" evidence="2">
    <location>
        <begin position="140"/>
        <end position="143"/>
    </location>
    <ligand>
        <name>FMN</name>
        <dbReference type="ChEBI" id="CHEBI:58210"/>
    </ligand>
</feature>
<sequence>MSKVLVLKSSILAGYSQSNQLSDYFVEQWREKHSADEITVRDLATNPIPVLDGELVGALRPSDAPLTPRQQEALALSDELIAELKAHDVIVIAAPMYNFNISTQLKNYFDLVARAGVTFRYTEKGPEGLVTGKKAIVITSRGGIHKDGPTDLVTPYLSTFLGFIGITDVKFVFAEGIAYGPEMAAKAQSDAKAAIDSIVAE</sequence>
<protein>
    <recommendedName>
        <fullName evidence="2">FMN-dependent NADH:quinone oxidoreductase</fullName>
        <ecNumber evidence="2">1.6.5.-</ecNumber>
    </recommendedName>
    <alternativeName>
        <fullName evidence="2">Azo-dye reductase</fullName>
    </alternativeName>
    <alternativeName>
        <fullName evidence="2">FMN-dependent NADH-azo compound oxidoreductase</fullName>
    </alternativeName>
    <alternativeName>
        <fullName evidence="2">FMN-dependent NADH-azoreductase</fullName>
        <ecNumber evidence="2">1.7.1.17</ecNumber>
    </alternativeName>
</protein>
<evidence type="ECO:0000250" key="1"/>
<evidence type="ECO:0000255" key="2">
    <source>
        <dbReference type="HAMAP-Rule" id="MF_01216"/>
    </source>
</evidence>
<keyword id="KW-0285">Flavoprotein</keyword>
<keyword id="KW-0288">FMN</keyword>
<keyword id="KW-0520">NAD</keyword>
<keyword id="KW-0560">Oxidoreductase</keyword>
<keyword id="KW-1185">Reference proteome</keyword>
<name>AZOR_ECOL6</name>
<proteinExistence type="inferred from homology"/>
<dbReference type="EC" id="1.6.5.-" evidence="2"/>
<dbReference type="EC" id="1.7.1.17" evidence="2"/>
<dbReference type="EMBL" id="AE014075">
    <property type="protein sequence ID" value="AAN80302.1"/>
    <property type="molecule type" value="Genomic_DNA"/>
</dbReference>
<dbReference type="RefSeq" id="WP_000048971.1">
    <property type="nucleotide sequence ID" value="NZ_CP051263.1"/>
</dbReference>
<dbReference type="SMR" id="Q8FHN0"/>
<dbReference type="STRING" id="199310.c1839"/>
<dbReference type="KEGG" id="ecc:c1839"/>
<dbReference type="eggNOG" id="COG1182">
    <property type="taxonomic scope" value="Bacteria"/>
</dbReference>
<dbReference type="HOGENOM" id="CLU_088964_0_0_6"/>
<dbReference type="BioCyc" id="ECOL199310:C1839-MONOMER"/>
<dbReference type="Proteomes" id="UP000001410">
    <property type="component" value="Chromosome"/>
</dbReference>
<dbReference type="GO" id="GO:0009055">
    <property type="term" value="F:electron transfer activity"/>
    <property type="evidence" value="ECO:0007669"/>
    <property type="project" value="UniProtKB-UniRule"/>
</dbReference>
<dbReference type="GO" id="GO:0010181">
    <property type="term" value="F:FMN binding"/>
    <property type="evidence" value="ECO:0007669"/>
    <property type="project" value="UniProtKB-UniRule"/>
</dbReference>
<dbReference type="GO" id="GO:0016652">
    <property type="term" value="F:oxidoreductase activity, acting on NAD(P)H as acceptor"/>
    <property type="evidence" value="ECO:0007669"/>
    <property type="project" value="UniProtKB-UniRule"/>
</dbReference>
<dbReference type="GO" id="GO:0016655">
    <property type="term" value="F:oxidoreductase activity, acting on NAD(P)H, quinone or similar compound as acceptor"/>
    <property type="evidence" value="ECO:0007669"/>
    <property type="project" value="InterPro"/>
</dbReference>
<dbReference type="FunFam" id="3.40.50.360:FF:000010">
    <property type="entry name" value="FMN-dependent NADH-azoreductase"/>
    <property type="match status" value="1"/>
</dbReference>
<dbReference type="Gene3D" id="3.40.50.360">
    <property type="match status" value="1"/>
</dbReference>
<dbReference type="HAMAP" id="MF_01216">
    <property type="entry name" value="Azoreductase_type1"/>
    <property type="match status" value="1"/>
</dbReference>
<dbReference type="InterPro" id="IPR003680">
    <property type="entry name" value="Flavodoxin_fold"/>
</dbReference>
<dbReference type="InterPro" id="IPR029039">
    <property type="entry name" value="Flavoprotein-like_sf"/>
</dbReference>
<dbReference type="InterPro" id="IPR050104">
    <property type="entry name" value="FMN-dep_NADH:Q_OxRdtase_AzoR1"/>
</dbReference>
<dbReference type="InterPro" id="IPR023048">
    <property type="entry name" value="NADH:quinone_OxRdtase_FMN_depd"/>
</dbReference>
<dbReference type="PANTHER" id="PTHR43741">
    <property type="entry name" value="FMN-DEPENDENT NADH-AZOREDUCTASE 1"/>
    <property type="match status" value="1"/>
</dbReference>
<dbReference type="PANTHER" id="PTHR43741:SF2">
    <property type="entry name" value="FMN-DEPENDENT NADH:QUINONE OXIDOREDUCTASE"/>
    <property type="match status" value="1"/>
</dbReference>
<dbReference type="Pfam" id="PF02525">
    <property type="entry name" value="Flavodoxin_2"/>
    <property type="match status" value="1"/>
</dbReference>
<dbReference type="SUPFAM" id="SSF52218">
    <property type="entry name" value="Flavoproteins"/>
    <property type="match status" value="1"/>
</dbReference>